<evidence type="ECO:0000255" key="1">
    <source>
        <dbReference type="HAMAP-Rule" id="MF_00238"/>
    </source>
</evidence>
<proteinExistence type="inferred from homology"/>
<organism>
    <name type="scientific">Pectobacterium atrosepticum (strain SCRI 1043 / ATCC BAA-672)</name>
    <name type="common">Erwinia carotovora subsp. atroseptica</name>
    <dbReference type="NCBI Taxonomy" id="218491"/>
    <lineage>
        <taxon>Bacteria</taxon>
        <taxon>Pseudomonadati</taxon>
        <taxon>Pseudomonadota</taxon>
        <taxon>Gammaproteobacteria</taxon>
        <taxon>Enterobacterales</taxon>
        <taxon>Pectobacteriaceae</taxon>
        <taxon>Pectobacterium</taxon>
    </lineage>
</organism>
<comment type="catalytic activity">
    <reaction evidence="1">
        <text>CMP + ATP = CDP + ADP</text>
        <dbReference type="Rhea" id="RHEA:11600"/>
        <dbReference type="ChEBI" id="CHEBI:30616"/>
        <dbReference type="ChEBI" id="CHEBI:58069"/>
        <dbReference type="ChEBI" id="CHEBI:60377"/>
        <dbReference type="ChEBI" id="CHEBI:456216"/>
        <dbReference type="EC" id="2.7.4.25"/>
    </reaction>
</comment>
<comment type="catalytic activity">
    <reaction evidence="1">
        <text>dCMP + ATP = dCDP + ADP</text>
        <dbReference type="Rhea" id="RHEA:25094"/>
        <dbReference type="ChEBI" id="CHEBI:30616"/>
        <dbReference type="ChEBI" id="CHEBI:57566"/>
        <dbReference type="ChEBI" id="CHEBI:58593"/>
        <dbReference type="ChEBI" id="CHEBI:456216"/>
        <dbReference type="EC" id="2.7.4.25"/>
    </reaction>
</comment>
<comment type="subcellular location">
    <subcellularLocation>
        <location evidence="1">Cytoplasm</location>
    </subcellularLocation>
</comment>
<comment type="similarity">
    <text evidence="1">Belongs to the cytidylate kinase family. Type 1 subfamily.</text>
</comment>
<protein>
    <recommendedName>
        <fullName evidence="1">Cytidylate kinase</fullName>
        <shortName evidence="1">CK</shortName>
        <ecNumber evidence="1">2.7.4.25</ecNumber>
    </recommendedName>
    <alternativeName>
        <fullName evidence="1">Cytidine monophosphate kinase</fullName>
        <shortName evidence="1">CMP kinase</shortName>
    </alternativeName>
</protein>
<dbReference type="EC" id="2.7.4.25" evidence="1"/>
<dbReference type="EMBL" id="BX950851">
    <property type="protein sequence ID" value="CAG75491.1"/>
    <property type="molecule type" value="Genomic_DNA"/>
</dbReference>
<dbReference type="RefSeq" id="WP_011094136.1">
    <property type="nucleotide sequence ID" value="NC_004547.2"/>
</dbReference>
<dbReference type="SMR" id="Q6D402"/>
<dbReference type="STRING" id="218491.ECA2592"/>
<dbReference type="KEGG" id="eca:ECA2592"/>
<dbReference type="PATRIC" id="fig|218491.5.peg.2626"/>
<dbReference type="eggNOG" id="COG0283">
    <property type="taxonomic scope" value="Bacteria"/>
</dbReference>
<dbReference type="HOGENOM" id="CLU_079959_0_2_6"/>
<dbReference type="OrthoDB" id="9807434at2"/>
<dbReference type="Proteomes" id="UP000007966">
    <property type="component" value="Chromosome"/>
</dbReference>
<dbReference type="GO" id="GO:0005829">
    <property type="term" value="C:cytosol"/>
    <property type="evidence" value="ECO:0007669"/>
    <property type="project" value="TreeGrafter"/>
</dbReference>
<dbReference type="GO" id="GO:0005524">
    <property type="term" value="F:ATP binding"/>
    <property type="evidence" value="ECO:0007669"/>
    <property type="project" value="UniProtKB-UniRule"/>
</dbReference>
<dbReference type="GO" id="GO:0036430">
    <property type="term" value="F:CMP kinase activity"/>
    <property type="evidence" value="ECO:0007669"/>
    <property type="project" value="RHEA"/>
</dbReference>
<dbReference type="GO" id="GO:0036431">
    <property type="term" value="F:dCMP kinase activity"/>
    <property type="evidence" value="ECO:0007669"/>
    <property type="project" value="RHEA"/>
</dbReference>
<dbReference type="GO" id="GO:0015949">
    <property type="term" value="P:nucleobase-containing small molecule interconversion"/>
    <property type="evidence" value="ECO:0007669"/>
    <property type="project" value="TreeGrafter"/>
</dbReference>
<dbReference type="GO" id="GO:0006220">
    <property type="term" value="P:pyrimidine nucleotide metabolic process"/>
    <property type="evidence" value="ECO:0007669"/>
    <property type="project" value="UniProtKB-UniRule"/>
</dbReference>
<dbReference type="CDD" id="cd02020">
    <property type="entry name" value="CMPK"/>
    <property type="match status" value="1"/>
</dbReference>
<dbReference type="FunFam" id="3.40.50.300:FF:000262">
    <property type="entry name" value="Cytidylate kinase"/>
    <property type="match status" value="1"/>
</dbReference>
<dbReference type="Gene3D" id="3.40.50.300">
    <property type="entry name" value="P-loop containing nucleotide triphosphate hydrolases"/>
    <property type="match status" value="1"/>
</dbReference>
<dbReference type="HAMAP" id="MF_00238">
    <property type="entry name" value="Cytidyl_kinase_type1"/>
    <property type="match status" value="1"/>
</dbReference>
<dbReference type="InterPro" id="IPR003136">
    <property type="entry name" value="Cytidylate_kin"/>
</dbReference>
<dbReference type="InterPro" id="IPR011994">
    <property type="entry name" value="Cytidylate_kinase_dom"/>
</dbReference>
<dbReference type="InterPro" id="IPR027417">
    <property type="entry name" value="P-loop_NTPase"/>
</dbReference>
<dbReference type="NCBIfam" id="TIGR00017">
    <property type="entry name" value="cmk"/>
    <property type="match status" value="1"/>
</dbReference>
<dbReference type="PANTHER" id="PTHR21299:SF2">
    <property type="entry name" value="CYTIDYLATE KINASE"/>
    <property type="match status" value="1"/>
</dbReference>
<dbReference type="PANTHER" id="PTHR21299">
    <property type="entry name" value="CYTIDYLATE KINASE/PANTOATE-BETA-ALANINE LIGASE"/>
    <property type="match status" value="1"/>
</dbReference>
<dbReference type="Pfam" id="PF02224">
    <property type="entry name" value="Cytidylate_kin"/>
    <property type="match status" value="1"/>
</dbReference>
<dbReference type="SUPFAM" id="SSF52540">
    <property type="entry name" value="P-loop containing nucleoside triphosphate hydrolases"/>
    <property type="match status" value="1"/>
</dbReference>
<accession>Q6D402</accession>
<sequence length="225" mass="24455">MTVMAPVVTVDGPSGAGKGTLCKALAEALQWNLLDSGAIYRVLALAALHHHVDISSEDALVPLASHLDVRFVAEDGQLKVILEGEDVSHEIRTEAVGNTASQAAAFPRVREALLRRQRAFREAPGLIADGRDMGTVVFPDAPVKIFLDASAEERAQRRMLQLQGKGFNVNFERLLSEIKERDDRDRSRPVAPLVPAADALVLDSTEMTIDEVIARALAYAREILA</sequence>
<feature type="chain" id="PRO_0000131917" description="Cytidylate kinase">
    <location>
        <begin position="1"/>
        <end position="225"/>
    </location>
</feature>
<feature type="binding site" evidence="1">
    <location>
        <begin position="12"/>
        <end position="20"/>
    </location>
    <ligand>
        <name>ATP</name>
        <dbReference type="ChEBI" id="CHEBI:30616"/>
    </ligand>
</feature>
<name>KCY_PECAS</name>
<gene>
    <name evidence="1" type="primary">cmk</name>
    <name type="ordered locus">ECA2592</name>
</gene>
<reference key="1">
    <citation type="journal article" date="2004" name="Proc. Natl. Acad. Sci. U.S.A.">
        <title>Genome sequence of the enterobacterial phytopathogen Erwinia carotovora subsp. atroseptica and characterization of virulence factors.</title>
        <authorList>
            <person name="Bell K.S."/>
            <person name="Sebaihia M."/>
            <person name="Pritchard L."/>
            <person name="Holden M.T.G."/>
            <person name="Hyman L.J."/>
            <person name="Holeva M.C."/>
            <person name="Thomson N.R."/>
            <person name="Bentley S.D."/>
            <person name="Churcher L.J.C."/>
            <person name="Mungall K."/>
            <person name="Atkin R."/>
            <person name="Bason N."/>
            <person name="Brooks K."/>
            <person name="Chillingworth T."/>
            <person name="Clark K."/>
            <person name="Doggett J."/>
            <person name="Fraser A."/>
            <person name="Hance Z."/>
            <person name="Hauser H."/>
            <person name="Jagels K."/>
            <person name="Moule S."/>
            <person name="Norbertczak H."/>
            <person name="Ormond D."/>
            <person name="Price C."/>
            <person name="Quail M.A."/>
            <person name="Sanders M."/>
            <person name="Walker D."/>
            <person name="Whitehead S."/>
            <person name="Salmond G.P.C."/>
            <person name="Birch P.R.J."/>
            <person name="Parkhill J."/>
            <person name="Toth I.K."/>
        </authorList>
    </citation>
    <scope>NUCLEOTIDE SEQUENCE [LARGE SCALE GENOMIC DNA]</scope>
    <source>
        <strain>SCRI 1043 / ATCC BAA-672</strain>
    </source>
</reference>
<keyword id="KW-0067">ATP-binding</keyword>
<keyword id="KW-0963">Cytoplasm</keyword>
<keyword id="KW-0418">Kinase</keyword>
<keyword id="KW-0547">Nucleotide-binding</keyword>
<keyword id="KW-1185">Reference proteome</keyword>
<keyword id="KW-0808">Transferase</keyword>